<sequence>MQKVRLQGSVAYVFKVFTESLKKMEIDPVAGAINEKTALVAVKYKHFAEKITADINKELWNMKIKDGKLFLVGMKELVDEDLREVNSKILSKLKKFGIDAGAYVTDDGDAVIMVSLNDVIIRILEKTLQETKVRAGNHMRNLRVKFGNDDKYAYTVIYSRNSKNESVVKDVEEVLKDE</sequence>
<reference key="1">
    <citation type="journal article" date="2000" name="Virology">
        <title>A novel lipothrixvirus, SIFV, of the extremely thermophilic crenarchaeon Sulfolobus.</title>
        <authorList>
            <person name="Arnold H.P."/>
            <person name="Zillig W."/>
            <person name="Ziese U."/>
            <person name="Holz I."/>
            <person name="Crosby M."/>
            <person name="Utterback T."/>
            <person name="Weidmann J.F."/>
            <person name="Umayam L.A."/>
            <person name="Teffera K."/>
            <person name="Kristjanson J.K."/>
            <person name="Klenk H.P."/>
            <person name="Nelson K.E."/>
            <person name="Fraser C.M."/>
        </authorList>
    </citation>
    <scope>NUCLEOTIDE SEQUENCE [GENOMIC DNA]</scope>
</reference>
<name>Y034_SIFVH</name>
<organism>
    <name type="scientific">Sulfolobus islandicus filamentous virus (isolate Iceland/Hveragerdi)</name>
    <name type="common">SIFV</name>
    <dbReference type="NCBI Taxonomy" id="654908"/>
    <lineage>
        <taxon>Viruses</taxon>
        <taxon>Adnaviria</taxon>
        <taxon>Zilligvirae</taxon>
        <taxon>Taleaviricota</taxon>
        <taxon>Tokiviricetes</taxon>
        <taxon>Ligamenvirales</taxon>
        <taxon>Lipothrixviridae</taxon>
        <taxon>Betalipothrixvirus</taxon>
        <taxon>Sulfolobus islandicus filamentous virus</taxon>
    </lineage>
</organism>
<feature type="chain" id="PRO_0000385418" description="Uncharacterized protein 34">
    <location>
        <begin position="1"/>
        <end position="178"/>
    </location>
</feature>
<organismHost>
    <name type="scientific">Saccharolobus islandicus</name>
    <name type="common">Sulfolobus islandicus</name>
    <dbReference type="NCBI Taxonomy" id="43080"/>
</organismHost>
<gene>
    <name type="primary">SIFV0034</name>
</gene>
<dbReference type="EMBL" id="AF440571">
    <property type="protein sequence ID" value="AAL27745.1"/>
    <property type="molecule type" value="Genomic_DNA"/>
</dbReference>
<dbReference type="RefSeq" id="NP_445699.1">
    <property type="nucleotide sequence ID" value="NC_003214.2"/>
</dbReference>
<dbReference type="SMR" id="Q914J6"/>
<dbReference type="GeneID" id="922295"/>
<dbReference type="KEGG" id="vg:922295"/>
<dbReference type="Proteomes" id="UP000007017">
    <property type="component" value="Segment"/>
</dbReference>
<keyword id="KW-1185">Reference proteome</keyword>
<proteinExistence type="predicted"/>
<protein>
    <recommendedName>
        <fullName>Uncharacterized protein 34</fullName>
    </recommendedName>
</protein>
<accession>Q914J6</accession>